<gene>
    <name evidence="1" type="primary">miaA</name>
    <name type="ordered locus">Acid_1297</name>
</gene>
<dbReference type="EC" id="2.5.1.75" evidence="1"/>
<dbReference type="EMBL" id="CP000473">
    <property type="protein sequence ID" value="ABJ82291.1"/>
    <property type="molecule type" value="Genomic_DNA"/>
</dbReference>
<dbReference type="SMR" id="Q029I5"/>
<dbReference type="FunCoup" id="Q029I5">
    <property type="interactions" value="561"/>
</dbReference>
<dbReference type="STRING" id="234267.Acid_1297"/>
<dbReference type="KEGG" id="sus:Acid_1297"/>
<dbReference type="eggNOG" id="COG0324">
    <property type="taxonomic scope" value="Bacteria"/>
</dbReference>
<dbReference type="HOGENOM" id="CLU_032616_0_1_0"/>
<dbReference type="InParanoid" id="Q029I5"/>
<dbReference type="OrthoDB" id="9776390at2"/>
<dbReference type="GO" id="GO:0005524">
    <property type="term" value="F:ATP binding"/>
    <property type="evidence" value="ECO:0007669"/>
    <property type="project" value="UniProtKB-UniRule"/>
</dbReference>
<dbReference type="GO" id="GO:0052381">
    <property type="term" value="F:tRNA dimethylallyltransferase activity"/>
    <property type="evidence" value="ECO:0007669"/>
    <property type="project" value="UniProtKB-UniRule"/>
</dbReference>
<dbReference type="GO" id="GO:0006400">
    <property type="term" value="P:tRNA modification"/>
    <property type="evidence" value="ECO:0007669"/>
    <property type="project" value="TreeGrafter"/>
</dbReference>
<dbReference type="Gene3D" id="1.10.20.140">
    <property type="match status" value="1"/>
</dbReference>
<dbReference type="Gene3D" id="3.40.50.300">
    <property type="entry name" value="P-loop containing nucleotide triphosphate hydrolases"/>
    <property type="match status" value="1"/>
</dbReference>
<dbReference type="HAMAP" id="MF_00185">
    <property type="entry name" value="IPP_trans"/>
    <property type="match status" value="1"/>
</dbReference>
<dbReference type="InterPro" id="IPR039657">
    <property type="entry name" value="Dimethylallyltransferase"/>
</dbReference>
<dbReference type="InterPro" id="IPR018022">
    <property type="entry name" value="IPT"/>
</dbReference>
<dbReference type="InterPro" id="IPR027417">
    <property type="entry name" value="P-loop_NTPase"/>
</dbReference>
<dbReference type="NCBIfam" id="TIGR00174">
    <property type="entry name" value="miaA"/>
    <property type="match status" value="1"/>
</dbReference>
<dbReference type="PANTHER" id="PTHR11088">
    <property type="entry name" value="TRNA DIMETHYLALLYLTRANSFERASE"/>
    <property type="match status" value="1"/>
</dbReference>
<dbReference type="PANTHER" id="PTHR11088:SF60">
    <property type="entry name" value="TRNA DIMETHYLALLYLTRANSFERASE"/>
    <property type="match status" value="1"/>
</dbReference>
<dbReference type="Pfam" id="PF01715">
    <property type="entry name" value="IPPT"/>
    <property type="match status" value="1"/>
</dbReference>
<dbReference type="SUPFAM" id="SSF52540">
    <property type="entry name" value="P-loop containing nucleoside triphosphate hydrolases"/>
    <property type="match status" value="1"/>
</dbReference>
<name>MIAA_SOLUE</name>
<accession>Q029I5</accession>
<evidence type="ECO:0000255" key="1">
    <source>
        <dbReference type="HAMAP-Rule" id="MF_00185"/>
    </source>
</evidence>
<reference key="1">
    <citation type="journal article" date="2009" name="Appl. Environ. Microbiol.">
        <title>Three genomes from the phylum Acidobacteria provide insight into the lifestyles of these microorganisms in soils.</title>
        <authorList>
            <person name="Ward N.L."/>
            <person name="Challacombe J.F."/>
            <person name="Janssen P.H."/>
            <person name="Henrissat B."/>
            <person name="Coutinho P.M."/>
            <person name="Wu M."/>
            <person name="Xie G."/>
            <person name="Haft D.H."/>
            <person name="Sait M."/>
            <person name="Badger J."/>
            <person name="Barabote R.D."/>
            <person name="Bradley B."/>
            <person name="Brettin T.S."/>
            <person name="Brinkac L.M."/>
            <person name="Bruce D."/>
            <person name="Creasy T."/>
            <person name="Daugherty S.C."/>
            <person name="Davidsen T.M."/>
            <person name="DeBoy R.T."/>
            <person name="Detter J.C."/>
            <person name="Dodson R.J."/>
            <person name="Durkin A.S."/>
            <person name="Ganapathy A."/>
            <person name="Gwinn-Giglio M."/>
            <person name="Han C.S."/>
            <person name="Khouri H."/>
            <person name="Kiss H."/>
            <person name="Kothari S.P."/>
            <person name="Madupu R."/>
            <person name="Nelson K.E."/>
            <person name="Nelson W.C."/>
            <person name="Paulsen I."/>
            <person name="Penn K."/>
            <person name="Ren Q."/>
            <person name="Rosovitz M.J."/>
            <person name="Selengut J.D."/>
            <person name="Shrivastava S."/>
            <person name="Sullivan S.A."/>
            <person name="Tapia R."/>
            <person name="Thompson L.S."/>
            <person name="Watkins K.L."/>
            <person name="Yang Q."/>
            <person name="Yu C."/>
            <person name="Zafar N."/>
            <person name="Zhou L."/>
            <person name="Kuske C.R."/>
        </authorList>
    </citation>
    <scope>NUCLEOTIDE SEQUENCE [LARGE SCALE GENOMIC DNA]</scope>
    <source>
        <strain>Ellin6076</strain>
    </source>
</reference>
<feature type="chain" id="PRO_0000377327" description="tRNA dimethylallyltransferase">
    <location>
        <begin position="1"/>
        <end position="307"/>
    </location>
</feature>
<feature type="region of interest" description="Interaction with substrate tRNA" evidence="1">
    <location>
        <begin position="33"/>
        <end position="36"/>
    </location>
</feature>
<feature type="binding site" evidence="1">
    <location>
        <begin position="8"/>
        <end position="15"/>
    </location>
    <ligand>
        <name>ATP</name>
        <dbReference type="ChEBI" id="CHEBI:30616"/>
    </ligand>
</feature>
<feature type="binding site" evidence="1">
    <location>
        <begin position="10"/>
        <end position="15"/>
    </location>
    <ligand>
        <name>substrate</name>
    </ligand>
</feature>
<feature type="site" description="Interaction with substrate tRNA" evidence="1">
    <location>
        <position position="99"/>
    </location>
</feature>
<feature type="site" description="Interaction with substrate tRNA" evidence="1">
    <location>
        <position position="121"/>
    </location>
</feature>
<proteinExistence type="inferred from homology"/>
<sequence>MPLVAVAGPTGSGKSELALLIAEKFHGEIVNCDSLQVYRHFDIGTAKLPLGERRGIPHHLIDIIDPNELFTAGEYARIARNTIADISARGRLPILAGGTGFYLRALLDGLFEGPARDQPLRDRLTAREARRAGSLHRILRRLDSVSAAKIHANDVPKVTRALEVCLLTQRPVSELFARGRDSLRGYRTLKLGLLPDREVLYPRLDARCAWMFENGLVDEVRAILALGFAAECKPFESHGYKQALQHIRGELNLREAIFYAQRNTRNYAKRQITWFRREPELVWLKDFGNAPEIRETAMDRVAKFLGQ</sequence>
<keyword id="KW-0067">ATP-binding</keyword>
<keyword id="KW-0460">Magnesium</keyword>
<keyword id="KW-0547">Nucleotide-binding</keyword>
<keyword id="KW-0808">Transferase</keyword>
<keyword id="KW-0819">tRNA processing</keyword>
<protein>
    <recommendedName>
        <fullName evidence="1">tRNA dimethylallyltransferase</fullName>
        <ecNumber evidence="1">2.5.1.75</ecNumber>
    </recommendedName>
    <alternativeName>
        <fullName evidence="1">Dimethylallyl diphosphate:tRNA dimethylallyltransferase</fullName>
        <shortName evidence="1">DMAPP:tRNA dimethylallyltransferase</shortName>
        <shortName evidence="1">DMATase</shortName>
    </alternativeName>
    <alternativeName>
        <fullName evidence="1">Isopentenyl-diphosphate:tRNA isopentenyltransferase</fullName>
        <shortName evidence="1">IPP transferase</shortName>
        <shortName evidence="1">IPPT</shortName>
        <shortName evidence="1">IPTase</shortName>
    </alternativeName>
</protein>
<comment type="function">
    <text evidence="1">Catalyzes the transfer of a dimethylallyl group onto the adenine at position 37 in tRNAs that read codons beginning with uridine, leading to the formation of N6-(dimethylallyl)adenosine (i(6)A).</text>
</comment>
<comment type="catalytic activity">
    <reaction evidence="1">
        <text>adenosine(37) in tRNA + dimethylallyl diphosphate = N(6)-dimethylallyladenosine(37) in tRNA + diphosphate</text>
        <dbReference type="Rhea" id="RHEA:26482"/>
        <dbReference type="Rhea" id="RHEA-COMP:10162"/>
        <dbReference type="Rhea" id="RHEA-COMP:10375"/>
        <dbReference type="ChEBI" id="CHEBI:33019"/>
        <dbReference type="ChEBI" id="CHEBI:57623"/>
        <dbReference type="ChEBI" id="CHEBI:74411"/>
        <dbReference type="ChEBI" id="CHEBI:74415"/>
        <dbReference type="EC" id="2.5.1.75"/>
    </reaction>
</comment>
<comment type="cofactor">
    <cofactor evidence="1">
        <name>Mg(2+)</name>
        <dbReference type="ChEBI" id="CHEBI:18420"/>
    </cofactor>
</comment>
<comment type="subunit">
    <text evidence="1">Monomer.</text>
</comment>
<comment type="similarity">
    <text evidence="1">Belongs to the IPP transferase family.</text>
</comment>
<organism>
    <name type="scientific">Solibacter usitatus (strain Ellin6076)</name>
    <dbReference type="NCBI Taxonomy" id="234267"/>
    <lineage>
        <taxon>Bacteria</taxon>
        <taxon>Pseudomonadati</taxon>
        <taxon>Acidobacteriota</taxon>
        <taxon>Terriglobia</taxon>
        <taxon>Bryobacterales</taxon>
        <taxon>Solibacteraceae</taxon>
        <taxon>Candidatus Solibacter</taxon>
    </lineage>
</organism>